<sequence length="355" mass="38965">MTALKNDRFLRALLKQPVDVTPVWMMRQAGRYLPEYRASRAQAGDFMSLCMNPEFACEVTLQPLDRYPQLDAAILFSDILTIPDAMGQGLYFETGEGPRFKKVVSTLADIEALPIPDPHKDLGYVMDAVSTIRRELNGRVPLIGFSGSPWTLATYMVEGGSSKDFRKTKAMLYDNPQAMHLLLDKLAQSVTSYLNGQIQAGAQAVQIFDTWGGNLSAAAYQEFSLAYMKKIVSGLIREHDGRKVPVILFTKNGGLWLESIAEAGADALGLDWTCDIGNARARVGDKVALQGNMDPTVLYAKPEAIRTEVGRILASYGKGSGHVFNLGHGITPEVDPEHAGAFLRAVHELSAQYHE</sequence>
<proteinExistence type="inferred from homology"/>
<protein>
    <recommendedName>
        <fullName evidence="1">Uroporphyrinogen decarboxylase</fullName>
        <shortName evidence="1">UPD</shortName>
        <shortName evidence="1">URO-D</shortName>
        <ecNumber evidence="1">4.1.1.37</ecNumber>
    </recommendedName>
</protein>
<comment type="function">
    <text evidence="1">Catalyzes the decarboxylation of four acetate groups of uroporphyrinogen-III to yield coproporphyrinogen-III.</text>
</comment>
<comment type="catalytic activity">
    <reaction evidence="1">
        <text>uroporphyrinogen III + 4 H(+) = coproporphyrinogen III + 4 CO2</text>
        <dbReference type="Rhea" id="RHEA:19865"/>
        <dbReference type="ChEBI" id="CHEBI:15378"/>
        <dbReference type="ChEBI" id="CHEBI:16526"/>
        <dbReference type="ChEBI" id="CHEBI:57308"/>
        <dbReference type="ChEBI" id="CHEBI:57309"/>
        <dbReference type="EC" id="4.1.1.37"/>
    </reaction>
</comment>
<comment type="pathway">
    <text evidence="1">Porphyrin-containing compound metabolism; protoporphyrin-IX biosynthesis; coproporphyrinogen-III from 5-aminolevulinate: step 4/4.</text>
</comment>
<comment type="subunit">
    <text evidence="1">Homodimer.</text>
</comment>
<comment type="subcellular location">
    <subcellularLocation>
        <location evidence="1">Cytoplasm</location>
    </subcellularLocation>
</comment>
<comment type="similarity">
    <text evidence="1">Belongs to the uroporphyrinogen decarboxylase family.</text>
</comment>
<feature type="chain" id="PRO_1000023952" description="Uroporphyrinogen decarboxylase">
    <location>
        <begin position="1"/>
        <end position="355"/>
    </location>
</feature>
<feature type="binding site" evidence="1">
    <location>
        <begin position="27"/>
        <end position="31"/>
    </location>
    <ligand>
        <name>substrate</name>
    </ligand>
</feature>
<feature type="binding site" evidence="1">
    <location>
        <position position="78"/>
    </location>
    <ligand>
        <name>substrate</name>
    </ligand>
</feature>
<feature type="binding site" evidence="1">
    <location>
        <position position="155"/>
    </location>
    <ligand>
        <name>substrate</name>
    </ligand>
</feature>
<feature type="binding site" evidence="1">
    <location>
        <position position="210"/>
    </location>
    <ligand>
        <name>substrate</name>
    </ligand>
</feature>
<feature type="binding site" evidence="1">
    <location>
        <position position="328"/>
    </location>
    <ligand>
        <name>substrate</name>
    </ligand>
</feature>
<feature type="site" description="Transition state stabilizer" evidence="1">
    <location>
        <position position="78"/>
    </location>
</feature>
<reference key="1">
    <citation type="journal article" date="2009" name="Genome Biol.">
        <title>Genomic and genetic analyses of diversity and plant interactions of Pseudomonas fluorescens.</title>
        <authorList>
            <person name="Silby M.W."/>
            <person name="Cerdeno-Tarraga A.M."/>
            <person name="Vernikos G.S."/>
            <person name="Giddens S.R."/>
            <person name="Jackson R.W."/>
            <person name="Preston G.M."/>
            <person name="Zhang X.-X."/>
            <person name="Moon C.D."/>
            <person name="Gehrig S.M."/>
            <person name="Godfrey S.A.C."/>
            <person name="Knight C.G."/>
            <person name="Malone J.G."/>
            <person name="Robinson Z."/>
            <person name="Spiers A.J."/>
            <person name="Harris S."/>
            <person name="Challis G.L."/>
            <person name="Yaxley A.M."/>
            <person name="Harris D."/>
            <person name="Seeger K."/>
            <person name="Murphy L."/>
            <person name="Rutter S."/>
            <person name="Squares R."/>
            <person name="Quail M.A."/>
            <person name="Saunders E."/>
            <person name="Mavromatis K."/>
            <person name="Brettin T.S."/>
            <person name="Bentley S.D."/>
            <person name="Hothersall J."/>
            <person name="Stephens E."/>
            <person name="Thomas C.M."/>
            <person name="Parkhill J."/>
            <person name="Levy S.B."/>
            <person name="Rainey P.B."/>
            <person name="Thomson N.R."/>
        </authorList>
    </citation>
    <scope>NUCLEOTIDE SEQUENCE [LARGE SCALE GENOMIC DNA]</scope>
    <source>
        <strain>Pf0-1</strain>
    </source>
</reference>
<accession>Q3KJ97</accession>
<dbReference type="EC" id="4.1.1.37" evidence="1"/>
<dbReference type="EMBL" id="CP000094">
    <property type="protein sequence ID" value="ABA72159.1"/>
    <property type="molecule type" value="Genomic_DNA"/>
</dbReference>
<dbReference type="RefSeq" id="WP_007968321.1">
    <property type="nucleotide sequence ID" value="NC_007492.2"/>
</dbReference>
<dbReference type="SMR" id="Q3KJ97"/>
<dbReference type="KEGG" id="pfo:Pfl01_0415"/>
<dbReference type="eggNOG" id="COG0407">
    <property type="taxonomic scope" value="Bacteria"/>
</dbReference>
<dbReference type="HOGENOM" id="CLU_040933_0_0_6"/>
<dbReference type="UniPathway" id="UPA00251">
    <property type="reaction ID" value="UER00321"/>
</dbReference>
<dbReference type="Proteomes" id="UP000002704">
    <property type="component" value="Chromosome"/>
</dbReference>
<dbReference type="GO" id="GO:0005829">
    <property type="term" value="C:cytosol"/>
    <property type="evidence" value="ECO:0007669"/>
    <property type="project" value="TreeGrafter"/>
</dbReference>
<dbReference type="GO" id="GO:0004853">
    <property type="term" value="F:uroporphyrinogen decarboxylase activity"/>
    <property type="evidence" value="ECO:0007669"/>
    <property type="project" value="UniProtKB-UniRule"/>
</dbReference>
<dbReference type="GO" id="GO:0019353">
    <property type="term" value="P:protoporphyrinogen IX biosynthetic process from glutamate"/>
    <property type="evidence" value="ECO:0007669"/>
    <property type="project" value="TreeGrafter"/>
</dbReference>
<dbReference type="CDD" id="cd00717">
    <property type="entry name" value="URO-D"/>
    <property type="match status" value="1"/>
</dbReference>
<dbReference type="FunFam" id="3.20.20.210:FF:000001">
    <property type="entry name" value="Uroporphyrinogen decarboxylase"/>
    <property type="match status" value="1"/>
</dbReference>
<dbReference type="Gene3D" id="3.20.20.210">
    <property type="match status" value="1"/>
</dbReference>
<dbReference type="HAMAP" id="MF_00218">
    <property type="entry name" value="URO_D"/>
    <property type="match status" value="1"/>
</dbReference>
<dbReference type="InterPro" id="IPR038071">
    <property type="entry name" value="UROD/MetE-like_sf"/>
</dbReference>
<dbReference type="InterPro" id="IPR006361">
    <property type="entry name" value="Uroporphyrinogen_deCO2ase_HemE"/>
</dbReference>
<dbReference type="InterPro" id="IPR000257">
    <property type="entry name" value="Uroporphyrinogen_deCOase"/>
</dbReference>
<dbReference type="NCBIfam" id="TIGR01464">
    <property type="entry name" value="hemE"/>
    <property type="match status" value="1"/>
</dbReference>
<dbReference type="PANTHER" id="PTHR21091">
    <property type="entry name" value="METHYLTETRAHYDROFOLATE:HOMOCYSTEINE METHYLTRANSFERASE RELATED"/>
    <property type="match status" value="1"/>
</dbReference>
<dbReference type="PANTHER" id="PTHR21091:SF169">
    <property type="entry name" value="UROPORPHYRINOGEN DECARBOXYLASE"/>
    <property type="match status" value="1"/>
</dbReference>
<dbReference type="Pfam" id="PF01208">
    <property type="entry name" value="URO-D"/>
    <property type="match status" value="1"/>
</dbReference>
<dbReference type="SUPFAM" id="SSF51726">
    <property type="entry name" value="UROD/MetE-like"/>
    <property type="match status" value="1"/>
</dbReference>
<dbReference type="PROSITE" id="PS00906">
    <property type="entry name" value="UROD_1"/>
    <property type="match status" value="1"/>
</dbReference>
<dbReference type="PROSITE" id="PS00907">
    <property type="entry name" value="UROD_2"/>
    <property type="match status" value="1"/>
</dbReference>
<keyword id="KW-0963">Cytoplasm</keyword>
<keyword id="KW-0210">Decarboxylase</keyword>
<keyword id="KW-0456">Lyase</keyword>
<keyword id="KW-0627">Porphyrin biosynthesis</keyword>
<name>DCUP_PSEPF</name>
<evidence type="ECO:0000255" key="1">
    <source>
        <dbReference type="HAMAP-Rule" id="MF_00218"/>
    </source>
</evidence>
<organism>
    <name type="scientific">Pseudomonas fluorescens (strain Pf0-1)</name>
    <dbReference type="NCBI Taxonomy" id="205922"/>
    <lineage>
        <taxon>Bacteria</taxon>
        <taxon>Pseudomonadati</taxon>
        <taxon>Pseudomonadota</taxon>
        <taxon>Gammaproteobacteria</taxon>
        <taxon>Pseudomonadales</taxon>
        <taxon>Pseudomonadaceae</taxon>
        <taxon>Pseudomonas</taxon>
    </lineage>
</organism>
<gene>
    <name evidence="1" type="primary">hemE</name>
    <name type="ordered locus">Pfl01_0415</name>
</gene>